<proteinExistence type="inferred from homology"/>
<sequence>MSYFESFILALIQGFTEFLPISSSAHLILPSAILGWEDQGLAFDVAVHVGTLAAVVLYFRKEVVSLLSAFFASIFKGDRSKEAKLAWLIVLATIPACLFGFVMKDIVELYLRSAWVIATTTIVFGLLLWYVDKHAELKADEYQADWKKALFIGLAQAVAIIPGTSRSGATITAALYLGFTREAAARFSFLMSIPIIVLAGSYLGLKLVTSGEPVHSGFLLTGIITSFISAYICIHFFLKLISRMGMTPFVIYRLVLGVGLFAFLLTQ</sequence>
<gene>
    <name evidence="1" type="primary">uppP</name>
    <name type="ordered locus">VCM66_0484</name>
</gene>
<name>UPPP_VIBCM</name>
<protein>
    <recommendedName>
        <fullName evidence="1">Undecaprenyl-diphosphatase</fullName>
        <ecNumber evidence="1">3.6.1.27</ecNumber>
    </recommendedName>
    <alternativeName>
        <fullName evidence="1">Bacitracin resistance protein</fullName>
    </alternativeName>
    <alternativeName>
        <fullName evidence="1">Undecaprenyl pyrophosphate phosphatase</fullName>
    </alternativeName>
</protein>
<accession>C3LS16</accession>
<feature type="chain" id="PRO_1000148836" description="Undecaprenyl-diphosphatase">
    <location>
        <begin position="1"/>
        <end position="267"/>
    </location>
</feature>
<feature type="transmembrane region" description="Helical" evidence="1">
    <location>
        <begin position="1"/>
        <end position="21"/>
    </location>
</feature>
<feature type="transmembrane region" description="Helical" evidence="1">
    <location>
        <begin position="39"/>
        <end position="59"/>
    </location>
</feature>
<feature type="transmembrane region" description="Helical" evidence="1">
    <location>
        <begin position="83"/>
        <end position="103"/>
    </location>
</feature>
<feature type="transmembrane region" description="Helical" evidence="1">
    <location>
        <begin position="111"/>
        <end position="131"/>
    </location>
</feature>
<feature type="transmembrane region" description="Helical" evidence="1">
    <location>
        <begin position="149"/>
        <end position="169"/>
    </location>
</feature>
<feature type="transmembrane region" description="Helical" evidence="1">
    <location>
        <begin position="189"/>
        <end position="209"/>
    </location>
</feature>
<feature type="transmembrane region" description="Helical" evidence="1">
    <location>
        <begin position="218"/>
        <end position="238"/>
    </location>
</feature>
<feature type="transmembrane region" description="Helical" evidence="1">
    <location>
        <begin position="245"/>
        <end position="265"/>
    </location>
</feature>
<dbReference type="EC" id="3.6.1.27" evidence="1"/>
<dbReference type="EMBL" id="CP001233">
    <property type="protein sequence ID" value="ACP04809.1"/>
    <property type="molecule type" value="Genomic_DNA"/>
</dbReference>
<dbReference type="RefSeq" id="WP_000119813.1">
    <property type="nucleotide sequence ID" value="NC_012578.1"/>
</dbReference>
<dbReference type="SMR" id="C3LS16"/>
<dbReference type="KEGG" id="vcm:VCM66_0484"/>
<dbReference type="HOGENOM" id="CLU_060296_1_0_6"/>
<dbReference type="Proteomes" id="UP000001217">
    <property type="component" value="Chromosome I"/>
</dbReference>
<dbReference type="GO" id="GO:0005886">
    <property type="term" value="C:plasma membrane"/>
    <property type="evidence" value="ECO:0007669"/>
    <property type="project" value="UniProtKB-SubCell"/>
</dbReference>
<dbReference type="GO" id="GO:0050380">
    <property type="term" value="F:undecaprenyl-diphosphatase activity"/>
    <property type="evidence" value="ECO:0007669"/>
    <property type="project" value="UniProtKB-UniRule"/>
</dbReference>
<dbReference type="GO" id="GO:0071555">
    <property type="term" value="P:cell wall organization"/>
    <property type="evidence" value="ECO:0007669"/>
    <property type="project" value="UniProtKB-KW"/>
</dbReference>
<dbReference type="GO" id="GO:0009252">
    <property type="term" value="P:peptidoglycan biosynthetic process"/>
    <property type="evidence" value="ECO:0007669"/>
    <property type="project" value="UniProtKB-KW"/>
</dbReference>
<dbReference type="GO" id="GO:0008360">
    <property type="term" value="P:regulation of cell shape"/>
    <property type="evidence" value="ECO:0007669"/>
    <property type="project" value="UniProtKB-KW"/>
</dbReference>
<dbReference type="GO" id="GO:0046677">
    <property type="term" value="P:response to antibiotic"/>
    <property type="evidence" value="ECO:0007669"/>
    <property type="project" value="UniProtKB-UniRule"/>
</dbReference>
<dbReference type="HAMAP" id="MF_01006">
    <property type="entry name" value="Undec_diphosphatase"/>
    <property type="match status" value="1"/>
</dbReference>
<dbReference type="InterPro" id="IPR003824">
    <property type="entry name" value="UppP"/>
</dbReference>
<dbReference type="NCBIfam" id="NF001393">
    <property type="entry name" value="PRK00281.2-4"/>
    <property type="match status" value="1"/>
</dbReference>
<dbReference type="NCBIfam" id="TIGR00753">
    <property type="entry name" value="undec_PP_bacA"/>
    <property type="match status" value="1"/>
</dbReference>
<dbReference type="PANTHER" id="PTHR30622">
    <property type="entry name" value="UNDECAPRENYL-DIPHOSPHATASE"/>
    <property type="match status" value="1"/>
</dbReference>
<dbReference type="PANTHER" id="PTHR30622:SF4">
    <property type="entry name" value="UNDECAPRENYL-DIPHOSPHATASE"/>
    <property type="match status" value="1"/>
</dbReference>
<dbReference type="Pfam" id="PF02673">
    <property type="entry name" value="BacA"/>
    <property type="match status" value="1"/>
</dbReference>
<keyword id="KW-0046">Antibiotic resistance</keyword>
<keyword id="KW-0997">Cell inner membrane</keyword>
<keyword id="KW-1003">Cell membrane</keyword>
<keyword id="KW-0133">Cell shape</keyword>
<keyword id="KW-0961">Cell wall biogenesis/degradation</keyword>
<keyword id="KW-0378">Hydrolase</keyword>
<keyword id="KW-0472">Membrane</keyword>
<keyword id="KW-0573">Peptidoglycan synthesis</keyword>
<keyword id="KW-0812">Transmembrane</keyword>
<keyword id="KW-1133">Transmembrane helix</keyword>
<evidence type="ECO:0000255" key="1">
    <source>
        <dbReference type="HAMAP-Rule" id="MF_01006"/>
    </source>
</evidence>
<organism>
    <name type="scientific">Vibrio cholerae serotype O1 (strain M66-2)</name>
    <dbReference type="NCBI Taxonomy" id="579112"/>
    <lineage>
        <taxon>Bacteria</taxon>
        <taxon>Pseudomonadati</taxon>
        <taxon>Pseudomonadota</taxon>
        <taxon>Gammaproteobacteria</taxon>
        <taxon>Vibrionales</taxon>
        <taxon>Vibrionaceae</taxon>
        <taxon>Vibrio</taxon>
    </lineage>
</organism>
<comment type="function">
    <text evidence="1">Catalyzes the dephosphorylation of undecaprenyl diphosphate (UPP). Confers resistance to bacitracin.</text>
</comment>
<comment type="catalytic activity">
    <reaction evidence="1">
        <text>di-trans,octa-cis-undecaprenyl diphosphate + H2O = di-trans,octa-cis-undecaprenyl phosphate + phosphate + H(+)</text>
        <dbReference type="Rhea" id="RHEA:28094"/>
        <dbReference type="ChEBI" id="CHEBI:15377"/>
        <dbReference type="ChEBI" id="CHEBI:15378"/>
        <dbReference type="ChEBI" id="CHEBI:43474"/>
        <dbReference type="ChEBI" id="CHEBI:58405"/>
        <dbReference type="ChEBI" id="CHEBI:60392"/>
        <dbReference type="EC" id="3.6.1.27"/>
    </reaction>
</comment>
<comment type="subcellular location">
    <subcellularLocation>
        <location evidence="1">Cell inner membrane</location>
        <topology evidence="1">Multi-pass membrane protein</topology>
    </subcellularLocation>
</comment>
<comment type="miscellaneous">
    <text>Bacitracin is thought to be involved in the inhibition of peptidoglycan synthesis by sequestering undecaprenyl diphosphate, thereby reducing the pool of lipid carrier available.</text>
</comment>
<comment type="similarity">
    <text evidence="1">Belongs to the UppP family.</text>
</comment>
<reference key="1">
    <citation type="journal article" date="2008" name="PLoS ONE">
        <title>A recalibrated molecular clock and independent origins for the cholera pandemic clones.</title>
        <authorList>
            <person name="Feng L."/>
            <person name="Reeves P.R."/>
            <person name="Lan R."/>
            <person name="Ren Y."/>
            <person name="Gao C."/>
            <person name="Zhou Z."/>
            <person name="Ren Y."/>
            <person name="Cheng J."/>
            <person name="Wang W."/>
            <person name="Wang J."/>
            <person name="Qian W."/>
            <person name="Li D."/>
            <person name="Wang L."/>
        </authorList>
    </citation>
    <scope>NUCLEOTIDE SEQUENCE [LARGE SCALE GENOMIC DNA]</scope>
    <source>
        <strain>M66-2</strain>
    </source>
</reference>